<comment type="function">
    <text evidence="1">May protect the nitrogenase Fe-Mo protein from oxidative damage.</text>
</comment>
<comment type="subunit">
    <text evidence="1">Homotrimer; associates with NifD.</text>
</comment>
<comment type="similarity">
    <text evidence="1">Belongs to the NifW family.</text>
</comment>
<keyword id="KW-0535">Nitrogen fixation</keyword>
<proteinExistence type="inferred from homology"/>
<name>NIFW_RHOPT</name>
<reference key="1">
    <citation type="submission" date="2008-05" db="EMBL/GenBank/DDBJ databases">
        <title>Complete sequence of Rhodopseudomonas palustris TIE-1.</title>
        <authorList>
            <consortium name="US DOE Joint Genome Institute"/>
            <person name="Lucas S."/>
            <person name="Copeland A."/>
            <person name="Lapidus A."/>
            <person name="Glavina del Rio T."/>
            <person name="Dalin E."/>
            <person name="Tice H."/>
            <person name="Pitluck S."/>
            <person name="Chain P."/>
            <person name="Malfatti S."/>
            <person name="Shin M."/>
            <person name="Vergez L."/>
            <person name="Lang D."/>
            <person name="Schmutz J."/>
            <person name="Larimer F."/>
            <person name="Land M."/>
            <person name="Hauser L."/>
            <person name="Kyrpides N."/>
            <person name="Mikhailova N."/>
            <person name="Emerson D."/>
            <person name="Newman D.K."/>
            <person name="Roden E."/>
            <person name="Richardson P."/>
        </authorList>
    </citation>
    <scope>NUCLEOTIDE SEQUENCE [LARGE SCALE GENOMIC DNA]</scope>
    <source>
        <strain>TIE-1</strain>
    </source>
</reference>
<sequence>MSTSAVTEPVDIVARLQIAGSAEEFFELLGVAYDPKLLNVARLHILRRMGQYLAGEDLEHLPGDEAAARCKAVLERAYADFVASSPLDQRVFKVLKDAVAPKTPKRPAFVPLDALK</sequence>
<evidence type="ECO:0000255" key="1">
    <source>
        <dbReference type="HAMAP-Rule" id="MF_00529"/>
    </source>
</evidence>
<protein>
    <recommendedName>
        <fullName evidence="1">Nitrogenase-stabilizing/protective protein NifW</fullName>
    </recommendedName>
</protein>
<feature type="chain" id="PRO_1000127812" description="Nitrogenase-stabilizing/protective protein NifW">
    <location>
        <begin position="1"/>
        <end position="116"/>
    </location>
</feature>
<gene>
    <name evidence="1" type="primary">nifW</name>
    <name type="ordered locus">Rpal_5087</name>
</gene>
<dbReference type="EMBL" id="CP001096">
    <property type="protein sequence ID" value="ACF03576.1"/>
    <property type="molecule type" value="Genomic_DNA"/>
</dbReference>
<dbReference type="RefSeq" id="WP_012497758.1">
    <property type="nucleotide sequence ID" value="NC_011004.1"/>
</dbReference>
<dbReference type="KEGG" id="rpt:Rpal_5087"/>
<dbReference type="HOGENOM" id="CLU_145318_0_0_5"/>
<dbReference type="OrthoDB" id="9811868at2"/>
<dbReference type="Proteomes" id="UP000001725">
    <property type="component" value="Chromosome"/>
</dbReference>
<dbReference type="GO" id="GO:0009399">
    <property type="term" value="P:nitrogen fixation"/>
    <property type="evidence" value="ECO:0007669"/>
    <property type="project" value="UniProtKB-UniRule"/>
</dbReference>
<dbReference type="HAMAP" id="MF_00529">
    <property type="entry name" value="NifW"/>
    <property type="match status" value="1"/>
</dbReference>
<dbReference type="InterPro" id="IPR004893">
    <property type="entry name" value="NifW"/>
</dbReference>
<dbReference type="NCBIfam" id="NF002009">
    <property type="entry name" value="PRK00810.1"/>
    <property type="match status" value="1"/>
</dbReference>
<dbReference type="Pfam" id="PF03206">
    <property type="entry name" value="NifW"/>
    <property type="match status" value="1"/>
</dbReference>
<dbReference type="PIRSF" id="PIRSF005790">
    <property type="entry name" value="NifW"/>
    <property type="match status" value="1"/>
</dbReference>
<organism>
    <name type="scientific">Rhodopseudomonas palustris (strain TIE-1)</name>
    <dbReference type="NCBI Taxonomy" id="395960"/>
    <lineage>
        <taxon>Bacteria</taxon>
        <taxon>Pseudomonadati</taxon>
        <taxon>Pseudomonadota</taxon>
        <taxon>Alphaproteobacteria</taxon>
        <taxon>Hyphomicrobiales</taxon>
        <taxon>Nitrobacteraceae</taxon>
        <taxon>Rhodopseudomonas</taxon>
    </lineage>
</organism>
<accession>B3QB33</accession>